<name>HEM3_BLOFL</name>
<keyword id="KW-0627">Porphyrin biosynthesis</keyword>
<keyword id="KW-1185">Reference proteome</keyword>
<keyword id="KW-0808">Transferase</keyword>
<proteinExistence type="inferred from homology"/>
<accession>Q7VRM4</accession>
<sequence length="311" mass="35012">MQAKILRIATRKSPLAICQACYVCNKLKHYHPHIQTELIPIITTGDTSLHTVSKTNKIKKGAFIKELEYALIEHRADIAVHSMKDVTVLLPKELIIPVLCKRHDPRDAFVSIQYPNIHSLPTGSIIGTSSLRRQCQIRAQRSDLILHDLRGNINTRIKKLHQGQYNAIILAVAGLTRLKLTKYIQTYIDPSELLPAMGQGVIAIECRINDINTISLLSPLYHKETSLCIKSERAVTTYLESYCRLPIASYAEIQNNQIWLRALIGLPDGSIIIRTEGIASLDKAEELGLNLAKDLLIQFKKNTHFDINSIK</sequence>
<evidence type="ECO:0000255" key="1">
    <source>
        <dbReference type="HAMAP-Rule" id="MF_00260"/>
    </source>
</evidence>
<dbReference type="EC" id="2.5.1.61" evidence="1"/>
<dbReference type="EMBL" id="BX248583">
    <property type="protein sequence ID" value="CAD83262.1"/>
    <property type="molecule type" value="Genomic_DNA"/>
</dbReference>
<dbReference type="SMR" id="Q7VRM4"/>
<dbReference type="STRING" id="203907.Bfl580"/>
<dbReference type="KEGG" id="bfl:Bfl580"/>
<dbReference type="eggNOG" id="COG0181">
    <property type="taxonomic scope" value="Bacteria"/>
</dbReference>
<dbReference type="HOGENOM" id="CLU_019704_1_0_6"/>
<dbReference type="OrthoDB" id="9810298at2"/>
<dbReference type="UniPathway" id="UPA00251">
    <property type="reaction ID" value="UER00319"/>
</dbReference>
<dbReference type="Proteomes" id="UP000002192">
    <property type="component" value="Chromosome"/>
</dbReference>
<dbReference type="GO" id="GO:0005737">
    <property type="term" value="C:cytoplasm"/>
    <property type="evidence" value="ECO:0007669"/>
    <property type="project" value="TreeGrafter"/>
</dbReference>
<dbReference type="GO" id="GO:0004418">
    <property type="term" value="F:hydroxymethylbilane synthase activity"/>
    <property type="evidence" value="ECO:0007669"/>
    <property type="project" value="UniProtKB-UniRule"/>
</dbReference>
<dbReference type="GO" id="GO:0006782">
    <property type="term" value="P:protoporphyrinogen IX biosynthetic process"/>
    <property type="evidence" value="ECO:0007669"/>
    <property type="project" value="UniProtKB-UniRule"/>
</dbReference>
<dbReference type="FunFam" id="3.40.190.10:FF:000005">
    <property type="entry name" value="Porphobilinogen deaminase"/>
    <property type="match status" value="1"/>
</dbReference>
<dbReference type="Gene3D" id="3.40.190.10">
    <property type="entry name" value="Periplasmic binding protein-like II"/>
    <property type="match status" value="2"/>
</dbReference>
<dbReference type="Gene3D" id="3.30.160.40">
    <property type="entry name" value="Porphobilinogen deaminase, C-terminal domain"/>
    <property type="match status" value="1"/>
</dbReference>
<dbReference type="HAMAP" id="MF_00260">
    <property type="entry name" value="Porphobil_deam"/>
    <property type="match status" value="1"/>
</dbReference>
<dbReference type="InterPro" id="IPR000860">
    <property type="entry name" value="HemC"/>
</dbReference>
<dbReference type="InterPro" id="IPR022417">
    <property type="entry name" value="Porphobilin_deaminase_N"/>
</dbReference>
<dbReference type="InterPro" id="IPR022418">
    <property type="entry name" value="Porphobilinogen_deaminase_C"/>
</dbReference>
<dbReference type="InterPro" id="IPR036803">
    <property type="entry name" value="Porphobilinogen_deaminase_C_sf"/>
</dbReference>
<dbReference type="NCBIfam" id="TIGR00212">
    <property type="entry name" value="hemC"/>
    <property type="match status" value="1"/>
</dbReference>
<dbReference type="PANTHER" id="PTHR11557">
    <property type="entry name" value="PORPHOBILINOGEN DEAMINASE"/>
    <property type="match status" value="1"/>
</dbReference>
<dbReference type="PANTHER" id="PTHR11557:SF0">
    <property type="entry name" value="PORPHOBILINOGEN DEAMINASE"/>
    <property type="match status" value="1"/>
</dbReference>
<dbReference type="Pfam" id="PF01379">
    <property type="entry name" value="Porphobil_deam"/>
    <property type="match status" value="1"/>
</dbReference>
<dbReference type="Pfam" id="PF03900">
    <property type="entry name" value="Porphobil_deamC"/>
    <property type="match status" value="1"/>
</dbReference>
<dbReference type="PIRSF" id="PIRSF001438">
    <property type="entry name" value="4pyrrol_synth_OHMeBilane_synth"/>
    <property type="match status" value="1"/>
</dbReference>
<dbReference type="PRINTS" id="PR00151">
    <property type="entry name" value="PORPHBDMNASE"/>
</dbReference>
<dbReference type="SUPFAM" id="SSF53850">
    <property type="entry name" value="Periplasmic binding protein-like II"/>
    <property type="match status" value="1"/>
</dbReference>
<dbReference type="SUPFAM" id="SSF54782">
    <property type="entry name" value="Porphobilinogen deaminase (hydroxymethylbilane synthase), C-terminal domain"/>
    <property type="match status" value="1"/>
</dbReference>
<organism>
    <name type="scientific">Blochmanniella floridana</name>
    <dbReference type="NCBI Taxonomy" id="203907"/>
    <lineage>
        <taxon>Bacteria</taxon>
        <taxon>Pseudomonadati</taxon>
        <taxon>Pseudomonadota</taxon>
        <taxon>Gammaproteobacteria</taxon>
        <taxon>Enterobacterales</taxon>
        <taxon>Enterobacteriaceae</taxon>
        <taxon>ant endosymbionts</taxon>
        <taxon>Candidatus Blochmanniella</taxon>
    </lineage>
</organism>
<comment type="function">
    <text evidence="1">Tetrapolymerization of the monopyrrole PBG into the hydroxymethylbilane pre-uroporphyrinogen in several discrete steps.</text>
</comment>
<comment type="catalytic activity">
    <reaction evidence="1">
        <text>4 porphobilinogen + H2O = hydroxymethylbilane + 4 NH4(+)</text>
        <dbReference type="Rhea" id="RHEA:13185"/>
        <dbReference type="ChEBI" id="CHEBI:15377"/>
        <dbReference type="ChEBI" id="CHEBI:28938"/>
        <dbReference type="ChEBI" id="CHEBI:57845"/>
        <dbReference type="ChEBI" id="CHEBI:58126"/>
        <dbReference type="EC" id="2.5.1.61"/>
    </reaction>
</comment>
<comment type="cofactor">
    <cofactor evidence="1">
        <name>dipyrromethane</name>
        <dbReference type="ChEBI" id="CHEBI:60342"/>
    </cofactor>
    <text evidence="1">Binds 1 dipyrromethane group covalently.</text>
</comment>
<comment type="pathway">
    <text evidence="1">Porphyrin-containing compound metabolism; protoporphyrin-IX biosynthesis; coproporphyrinogen-III from 5-aminolevulinate: step 2/4.</text>
</comment>
<comment type="subunit">
    <text evidence="1">Monomer.</text>
</comment>
<comment type="miscellaneous">
    <text evidence="1">The porphobilinogen subunits are added to the dipyrromethane group.</text>
</comment>
<comment type="similarity">
    <text evidence="1">Belongs to the HMBS family.</text>
</comment>
<reference key="1">
    <citation type="journal article" date="2003" name="Proc. Natl. Acad. Sci. U.S.A.">
        <title>The genome sequence of Blochmannia floridanus: comparative analysis of reduced genomes.</title>
        <authorList>
            <person name="Gil R."/>
            <person name="Silva F.J."/>
            <person name="Zientz E."/>
            <person name="Delmotte F."/>
            <person name="Gonzalez-Candelas F."/>
            <person name="Latorre A."/>
            <person name="Rausell C."/>
            <person name="Kamerbeek J."/>
            <person name="Gadau J."/>
            <person name="Hoelldobler B."/>
            <person name="van Ham R.C.H.J."/>
            <person name="Gross R."/>
            <person name="Moya A."/>
        </authorList>
    </citation>
    <scope>NUCLEOTIDE SEQUENCE [LARGE SCALE GENOMIC DNA]</scope>
</reference>
<gene>
    <name evidence="1" type="primary">hemC</name>
    <name type="ordered locus">Bfl580</name>
</gene>
<protein>
    <recommendedName>
        <fullName evidence="1">Porphobilinogen deaminase</fullName>
        <shortName evidence="1">PBG</shortName>
        <ecNumber evidence="1">2.5.1.61</ecNumber>
    </recommendedName>
    <alternativeName>
        <fullName evidence="1">Hydroxymethylbilane synthase</fullName>
        <shortName evidence="1">HMBS</shortName>
    </alternativeName>
    <alternativeName>
        <fullName evidence="1">Pre-uroporphyrinogen synthase</fullName>
    </alternativeName>
</protein>
<feature type="chain" id="PRO_0000142920" description="Porphobilinogen deaminase">
    <location>
        <begin position="1"/>
        <end position="311"/>
    </location>
</feature>
<feature type="modified residue" description="S-(dipyrrolylmethanemethyl)cysteine" evidence="1">
    <location>
        <position position="243"/>
    </location>
</feature>